<protein>
    <recommendedName>
        <fullName>Clitocypin-4/-3</fullName>
    </recommendedName>
    <alternativeName>
        <fullName>Cysteine protease inhibitor clt4/clt3</fullName>
    </alternativeName>
</protein>
<proteinExistence type="inferred from homology"/>
<evidence type="ECO:0000250" key="1">
    <source>
        <dbReference type="UniProtKB" id="Q9P4A2"/>
    </source>
</evidence>
<evidence type="ECO:0000305" key="2"/>
<reference key="1">
    <citation type="journal article" date="2006" name="Biol. Chem.">
        <title>Heterogeneity in the cysteine protease inhibitor clitocypin gene family.</title>
        <authorList>
            <person name="Sabotic J."/>
            <person name="Gaser D."/>
            <person name="Rogelj B."/>
            <person name="Gruden K."/>
            <person name="Strukelj B."/>
            <person name="Brzin J."/>
        </authorList>
    </citation>
    <scope>NUCLEOTIDE SEQUENCE [GENOMIC DNA]</scope>
    <source>
        <strain>Vrh2004</strain>
    </source>
</reference>
<gene>
    <name type="primary">clt4</name>
    <name type="synonym">clt3</name>
</gene>
<keyword id="KW-0646">Protease inhibitor</keyword>
<keyword id="KW-0789">Thiol protease inhibitor</keyword>
<dbReference type="EMBL" id="DQ150591">
    <property type="protein sequence ID" value="AAZ78484.1"/>
    <property type="molecule type" value="Genomic_DNA"/>
</dbReference>
<dbReference type="EMBL" id="DQ150592">
    <property type="protein sequence ID" value="AAZ78485.1"/>
    <property type="molecule type" value="Genomic_DNA"/>
</dbReference>
<dbReference type="SMR" id="Q3Y9I2"/>
<dbReference type="MEROPS" id="I48.001"/>
<dbReference type="GO" id="GO:0004869">
    <property type="term" value="F:cysteine-type endopeptidase inhibitor activity"/>
    <property type="evidence" value="ECO:0007669"/>
    <property type="project" value="UniProtKB-KW"/>
</dbReference>
<dbReference type="Gene3D" id="2.80.10.50">
    <property type="match status" value="1"/>
</dbReference>
<dbReference type="InterPro" id="IPR019508">
    <property type="entry name" value="Prot_inh_I48_clitocypin"/>
</dbReference>
<dbReference type="Pfam" id="PF10467">
    <property type="entry name" value="Inhibitor_I48"/>
    <property type="match status" value="1"/>
</dbReference>
<sequence length="152" mass="16893">MASLEDGTYRLRAVTTSNPDPGVGGEYATVEGARQPVKAEPSTPPFFERQIWQVTRNADGQYTIKYQGLNAPFEYGFSYDQLEQNAPVIAGDPKEYILQLVPSTTDVYIIRAPIQRVGVDVEVGVQGNNLVYKFFPVDGSGGDRPAWRFTRE</sequence>
<comment type="function">
    <text evidence="1">Binds and inhibits cysteine proteinases. Inhibits most strongly papain and cathepsin L, more weakly bromelain and cathepsin B while it is completely ineffective against cathepsin H.</text>
</comment>
<comment type="subunit">
    <text evidence="1">Homodimer.</text>
</comment>
<comment type="subcellular location">
    <text evidence="1">Not secreted.</text>
</comment>
<comment type="similarity">
    <text evidence="2">Belongs to the protease inhibitor I48 family.</text>
</comment>
<accession>Q3Y9I2</accession>
<organism>
    <name type="scientific">Clitocybe nebularis</name>
    <name type="common">Clouded agaric</name>
    <name type="synonym">Lepista nebularis</name>
    <dbReference type="NCBI Taxonomy" id="117024"/>
    <lineage>
        <taxon>Eukaryota</taxon>
        <taxon>Fungi</taxon>
        <taxon>Dikarya</taxon>
        <taxon>Basidiomycota</taxon>
        <taxon>Agaricomycotina</taxon>
        <taxon>Agaricomycetes</taxon>
        <taxon>Agaricomycetidae</taxon>
        <taxon>Agaricales</taxon>
        <taxon>Tricholomatineae</taxon>
        <taxon>Clitocybaceae</taxon>
        <taxon>Clitocybe</taxon>
    </lineage>
</organism>
<name>CLIT4_CLINE</name>
<feature type="chain" id="PRO_0000453200" description="Clitocypin-4/-3">
    <location>
        <begin position="1"/>
        <end position="152"/>
    </location>
</feature>